<feature type="chain" id="PRO_0000410054" description="Pre-mRNA-splicing factor CWC26">
    <location>
        <begin position="1"/>
        <end position="331"/>
    </location>
</feature>
<feature type="region of interest" description="Disordered" evidence="3">
    <location>
        <begin position="23"/>
        <end position="48"/>
    </location>
</feature>
<feature type="region of interest" description="Disordered" evidence="3">
    <location>
        <begin position="98"/>
        <end position="261"/>
    </location>
</feature>
<feature type="coiled-coil region" evidence="2">
    <location>
        <begin position="186"/>
        <end position="216"/>
    </location>
</feature>
<feature type="compositionally biased region" description="Basic and acidic residues" evidence="3">
    <location>
        <begin position="150"/>
        <end position="160"/>
    </location>
</feature>
<feature type="compositionally biased region" description="Basic and acidic residues" evidence="3">
    <location>
        <begin position="169"/>
        <end position="259"/>
    </location>
</feature>
<gene>
    <name type="primary">CWC26</name>
    <name type="ordered locus">CNBB2390</name>
</gene>
<proteinExistence type="inferred from homology"/>
<protein>
    <recommendedName>
        <fullName>Pre-mRNA-splicing factor CWC26</fullName>
    </recommendedName>
</protein>
<comment type="function">
    <text evidence="1">Involved in pre-mRNA splicing.</text>
</comment>
<comment type="subunit">
    <text evidence="1">Associated with the spliceosome.</text>
</comment>
<comment type="subcellular location">
    <subcellularLocation>
        <location evidence="1">Cytoplasm</location>
    </subcellularLocation>
    <subcellularLocation>
        <location evidence="1">Nucleus</location>
    </subcellularLocation>
</comment>
<comment type="similarity">
    <text evidence="4">Belongs to the CWC26 family.</text>
</comment>
<keyword id="KW-0175">Coiled coil</keyword>
<keyword id="KW-0963">Cytoplasm</keyword>
<keyword id="KW-0507">mRNA processing</keyword>
<keyword id="KW-0508">mRNA splicing</keyword>
<keyword id="KW-0539">Nucleus</keyword>
<keyword id="KW-0747">Spliceosome</keyword>
<organism>
    <name type="scientific">Cryptococcus neoformans var. neoformans serotype D (strain B-3501A)</name>
    <name type="common">Filobasidiella neoformans</name>
    <dbReference type="NCBI Taxonomy" id="283643"/>
    <lineage>
        <taxon>Eukaryota</taxon>
        <taxon>Fungi</taxon>
        <taxon>Dikarya</taxon>
        <taxon>Basidiomycota</taxon>
        <taxon>Agaricomycotina</taxon>
        <taxon>Tremellomycetes</taxon>
        <taxon>Tremellales</taxon>
        <taxon>Cryptococcaceae</taxon>
        <taxon>Cryptococcus</taxon>
        <taxon>Cryptococcus neoformans species complex</taxon>
    </lineage>
</organism>
<accession>P0CN01</accession>
<accession>Q55XX5</accession>
<accession>Q5KM20</accession>
<reference key="1">
    <citation type="journal article" date="2005" name="Science">
        <title>The genome of the basidiomycetous yeast and human pathogen Cryptococcus neoformans.</title>
        <authorList>
            <person name="Loftus B.J."/>
            <person name="Fung E."/>
            <person name="Roncaglia P."/>
            <person name="Rowley D."/>
            <person name="Amedeo P."/>
            <person name="Bruno D."/>
            <person name="Vamathevan J."/>
            <person name="Miranda M."/>
            <person name="Anderson I.J."/>
            <person name="Fraser J.A."/>
            <person name="Allen J.E."/>
            <person name="Bosdet I.E."/>
            <person name="Brent M.R."/>
            <person name="Chiu R."/>
            <person name="Doering T.L."/>
            <person name="Donlin M.J."/>
            <person name="D'Souza C.A."/>
            <person name="Fox D.S."/>
            <person name="Grinberg V."/>
            <person name="Fu J."/>
            <person name="Fukushima M."/>
            <person name="Haas B.J."/>
            <person name="Huang J.C."/>
            <person name="Janbon G."/>
            <person name="Jones S.J.M."/>
            <person name="Koo H.L."/>
            <person name="Krzywinski M.I."/>
            <person name="Kwon-Chung K.J."/>
            <person name="Lengeler K.B."/>
            <person name="Maiti R."/>
            <person name="Marra M.A."/>
            <person name="Marra R.E."/>
            <person name="Mathewson C.A."/>
            <person name="Mitchell T.G."/>
            <person name="Pertea M."/>
            <person name="Riggs F.R."/>
            <person name="Salzberg S.L."/>
            <person name="Schein J.E."/>
            <person name="Shvartsbeyn A."/>
            <person name="Shin H."/>
            <person name="Shumway M."/>
            <person name="Specht C.A."/>
            <person name="Suh B.B."/>
            <person name="Tenney A."/>
            <person name="Utterback T.R."/>
            <person name="Wickes B.L."/>
            <person name="Wortman J.R."/>
            <person name="Wye N.H."/>
            <person name="Kronstad J.W."/>
            <person name="Lodge J.K."/>
            <person name="Heitman J."/>
            <person name="Davis R.W."/>
            <person name="Fraser C.M."/>
            <person name="Hyman R.W."/>
        </authorList>
    </citation>
    <scope>NUCLEOTIDE SEQUENCE [LARGE SCALE GENOMIC DNA]</scope>
    <source>
        <strain>B-3501A</strain>
    </source>
</reference>
<sequence>MSDLKAYLAAKYMSGPKADAILARSSDPTLKKKRKKQQTNEDYIGGSVKAEASGGLMLRDEDEVWGRSKNEDEEDDAPVIGKDLATFKGSKSSWATVANKSALPLPQAEPTSPQDIKPDIKEEPDIDGPAASAPVQMTKRRGGLRTAAQLKEDTERELAEQRSPSPAEGEERPDPTETVHRDATGKIIDVKKRQEEERIREEEERRKEAERKEWTKGMVQRRDREERRRLEKKMAEADVGRSKDDVRMNKEMKEEERWNDPAAAFLTKKKKKGPRRPKYEGPWAPNRFGIAPGFRWDGVDRSNGFEKKYFQAQNTRARREYEHNQWSVEDM</sequence>
<dbReference type="EMBL" id="AAEY01000009">
    <property type="protein sequence ID" value="EAL22607.1"/>
    <property type="molecule type" value="Genomic_DNA"/>
</dbReference>
<dbReference type="RefSeq" id="XP_777254.1">
    <property type="nucleotide sequence ID" value="XM_772161.1"/>
</dbReference>
<dbReference type="SMR" id="P0CN01"/>
<dbReference type="EnsemblFungi" id="AAW41599">
    <property type="protein sequence ID" value="AAW41599"/>
    <property type="gene ID" value="CNB03290"/>
</dbReference>
<dbReference type="GeneID" id="4934331"/>
<dbReference type="KEGG" id="cnb:CNBB2390"/>
<dbReference type="VEuPathDB" id="FungiDB:CNBB2390"/>
<dbReference type="HOGENOM" id="CLU_024195_0_1_1"/>
<dbReference type="OrthoDB" id="7699at5206"/>
<dbReference type="GO" id="GO:0005737">
    <property type="term" value="C:cytoplasm"/>
    <property type="evidence" value="ECO:0007669"/>
    <property type="project" value="UniProtKB-SubCell"/>
</dbReference>
<dbReference type="GO" id="GO:0070274">
    <property type="term" value="C:RES complex"/>
    <property type="evidence" value="ECO:0007669"/>
    <property type="project" value="TreeGrafter"/>
</dbReference>
<dbReference type="GO" id="GO:0005684">
    <property type="term" value="C:U2-type spliceosomal complex"/>
    <property type="evidence" value="ECO:0007669"/>
    <property type="project" value="TreeGrafter"/>
</dbReference>
<dbReference type="GO" id="GO:0003723">
    <property type="term" value="F:RNA binding"/>
    <property type="evidence" value="ECO:0007669"/>
    <property type="project" value="TreeGrafter"/>
</dbReference>
<dbReference type="GO" id="GO:0000398">
    <property type="term" value="P:mRNA splicing, via spliceosome"/>
    <property type="evidence" value="ECO:0007669"/>
    <property type="project" value="TreeGrafter"/>
</dbReference>
<dbReference type="InterPro" id="IPR018609">
    <property type="entry name" value="Bud13"/>
</dbReference>
<dbReference type="InterPro" id="IPR051112">
    <property type="entry name" value="CWC26_splicing_factor"/>
</dbReference>
<dbReference type="PANTHER" id="PTHR31809">
    <property type="entry name" value="BUD13 HOMOLOG"/>
    <property type="match status" value="1"/>
</dbReference>
<dbReference type="PANTHER" id="PTHR31809:SF0">
    <property type="entry name" value="BUD13 HOMOLOG"/>
    <property type="match status" value="1"/>
</dbReference>
<dbReference type="Pfam" id="PF09736">
    <property type="entry name" value="Bud13"/>
    <property type="match status" value="1"/>
</dbReference>
<evidence type="ECO:0000250" key="1"/>
<evidence type="ECO:0000255" key="2"/>
<evidence type="ECO:0000256" key="3">
    <source>
        <dbReference type="SAM" id="MobiDB-lite"/>
    </source>
</evidence>
<evidence type="ECO:0000305" key="4"/>
<name>CWC26_CRYNB</name>